<sequence length="270" mass="30063">MPELPEVEVTRLGIAPHLRGRRLEGAVVRDSRLRLPVNDDLAARVSGQRLLNLRRRGKYLLLDLERGTILIHLGMSGHLRVLPQSAPVQKHDHVDLLFADDLCLRFHDPRRFGAVLWLDDADHHPLLQHLGPEPLGDVFGAEYLYQRGRNRQIPVKSFLMDAHIVVGVGNIYANESLFAAGIDPRRPAGRIALPRYMKLVQAVRTVLEAAIAQGGTTLRDFTRPDGGNGYFRLSLAVYGREGEPCTHCGAPLQGVRIGGRATIYCSQCQR</sequence>
<reference key="1">
    <citation type="submission" date="2008-08" db="EMBL/GenBank/DDBJ databases">
        <title>Complete sequence of Acidithiobacillus ferrooxidans ATCC 53993.</title>
        <authorList>
            <person name="Lucas S."/>
            <person name="Copeland A."/>
            <person name="Lapidus A."/>
            <person name="Glavina del Rio T."/>
            <person name="Dalin E."/>
            <person name="Tice H."/>
            <person name="Bruce D."/>
            <person name="Goodwin L."/>
            <person name="Pitluck S."/>
            <person name="Sims D."/>
            <person name="Brettin T."/>
            <person name="Detter J.C."/>
            <person name="Han C."/>
            <person name="Kuske C.R."/>
            <person name="Larimer F."/>
            <person name="Land M."/>
            <person name="Hauser L."/>
            <person name="Kyrpides N."/>
            <person name="Lykidis A."/>
            <person name="Borole A.P."/>
        </authorList>
    </citation>
    <scope>NUCLEOTIDE SEQUENCE [LARGE SCALE GENOMIC DNA]</scope>
    <source>
        <strain>ATCC 53993 / BNL-5-31</strain>
    </source>
</reference>
<gene>
    <name evidence="2" type="primary">mutM</name>
    <name evidence="2" type="synonym">fpg</name>
    <name type="ordered locus">Lferr_2378</name>
</gene>
<feature type="initiator methionine" description="Removed" evidence="1">
    <location>
        <position position="1"/>
    </location>
</feature>
<feature type="chain" id="PRO_1000094026" description="Formamidopyrimidine-DNA glycosylase">
    <location>
        <begin position="2"/>
        <end position="270"/>
    </location>
</feature>
<feature type="zinc finger region" description="FPG-type" evidence="2">
    <location>
        <begin position="236"/>
        <end position="270"/>
    </location>
</feature>
<feature type="active site" description="Schiff-base intermediate with DNA" evidence="2">
    <location>
        <position position="2"/>
    </location>
</feature>
<feature type="active site" description="Proton donor" evidence="2">
    <location>
        <position position="3"/>
    </location>
</feature>
<feature type="active site" description="Proton donor; for beta-elimination activity" evidence="2">
    <location>
        <position position="58"/>
    </location>
</feature>
<feature type="active site" description="Proton donor; for delta-elimination activity" evidence="2">
    <location>
        <position position="260"/>
    </location>
</feature>
<feature type="binding site" evidence="2">
    <location>
        <position position="91"/>
    </location>
    <ligand>
        <name>DNA</name>
        <dbReference type="ChEBI" id="CHEBI:16991"/>
    </ligand>
</feature>
<feature type="binding site" evidence="2">
    <location>
        <position position="110"/>
    </location>
    <ligand>
        <name>DNA</name>
        <dbReference type="ChEBI" id="CHEBI:16991"/>
    </ligand>
</feature>
<feature type="binding site" evidence="2">
    <location>
        <position position="151"/>
    </location>
    <ligand>
        <name>DNA</name>
        <dbReference type="ChEBI" id="CHEBI:16991"/>
    </ligand>
</feature>
<evidence type="ECO:0000250" key="1"/>
<evidence type="ECO:0000255" key="2">
    <source>
        <dbReference type="HAMAP-Rule" id="MF_00103"/>
    </source>
</evidence>
<comment type="function">
    <text evidence="2">Involved in base excision repair of DNA damaged by oxidation or by mutagenic agents. Acts as a DNA glycosylase that recognizes and removes damaged bases. Has a preference for oxidized purines, such as 7,8-dihydro-8-oxoguanine (8-oxoG). Has AP (apurinic/apyrimidinic) lyase activity and introduces nicks in the DNA strand. Cleaves the DNA backbone by beta-delta elimination to generate a single-strand break at the site of the removed base with both 3'- and 5'-phosphates.</text>
</comment>
<comment type="catalytic activity">
    <reaction evidence="2">
        <text>Hydrolysis of DNA containing ring-opened 7-methylguanine residues, releasing 2,6-diamino-4-hydroxy-5-(N-methyl)formamidopyrimidine.</text>
        <dbReference type="EC" id="3.2.2.23"/>
    </reaction>
</comment>
<comment type="catalytic activity">
    <reaction evidence="2">
        <text>2'-deoxyribonucleotide-(2'-deoxyribose 5'-phosphate)-2'-deoxyribonucleotide-DNA = a 3'-end 2'-deoxyribonucleotide-(2,3-dehydro-2,3-deoxyribose 5'-phosphate)-DNA + a 5'-end 5'-phospho-2'-deoxyribonucleoside-DNA + H(+)</text>
        <dbReference type="Rhea" id="RHEA:66592"/>
        <dbReference type="Rhea" id="RHEA-COMP:13180"/>
        <dbReference type="Rhea" id="RHEA-COMP:16897"/>
        <dbReference type="Rhea" id="RHEA-COMP:17067"/>
        <dbReference type="ChEBI" id="CHEBI:15378"/>
        <dbReference type="ChEBI" id="CHEBI:136412"/>
        <dbReference type="ChEBI" id="CHEBI:157695"/>
        <dbReference type="ChEBI" id="CHEBI:167181"/>
        <dbReference type="EC" id="4.2.99.18"/>
    </reaction>
</comment>
<comment type="cofactor">
    <cofactor evidence="2">
        <name>Zn(2+)</name>
        <dbReference type="ChEBI" id="CHEBI:29105"/>
    </cofactor>
    <text evidence="2">Binds 1 zinc ion per subunit.</text>
</comment>
<comment type="subunit">
    <text evidence="2">Monomer.</text>
</comment>
<comment type="similarity">
    <text evidence="2">Belongs to the FPG family.</text>
</comment>
<protein>
    <recommendedName>
        <fullName evidence="2">Formamidopyrimidine-DNA glycosylase</fullName>
        <shortName evidence="2">Fapy-DNA glycosylase</shortName>
        <ecNumber evidence="2">3.2.2.23</ecNumber>
    </recommendedName>
    <alternativeName>
        <fullName evidence="2">DNA-(apurinic or apyrimidinic site) lyase MutM</fullName>
        <shortName evidence="2">AP lyase MutM</shortName>
        <ecNumber evidence="2">4.2.99.18</ecNumber>
    </alternativeName>
</protein>
<dbReference type="EC" id="3.2.2.23" evidence="2"/>
<dbReference type="EC" id="4.2.99.18" evidence="2"/>
<dbReference type="EMBL" id="CP001132">
    <property type="protein sequence ID" value="ACH84579.1"/>
    <property type="molecule type" value="Genomic_DNA"/>
</dbReference>
<dbReference type="RefSeq" id="WP_009567582.1">
    <property type="nucleotide sequence ID" value="NC_011206.1"/>
</dbReference>
<dbReference type="SMR" id="B5ENT6"/>
<dbReference type="GeneID" id="65281796"/>
<dbReference type="KEGG" id="afe:Lferr_2378"/>
<dbReference type="eggNOG" id="COG0266">
    <property type="taxonomic scope" value="Bacteria"/>
</dbReference>
<dbReference type="HOGENOM" id="CLU_038423_1_1_6"/>
<dbReference type="GO" id="GO:0034039">
    <property type="term" value="F:8-oxo-7,8-dihydroguanine DNA N-glycosylase activity"/>
    <property type="evidence" value="ECO:0007669"/>
    <property type="project" value="TreeGrafter"/>
</dbReference>
<dbReference type="GO" id="GO:0140078">
    <property type="term" value="F:class I DNA-(apurinic or apyrimidinic site) endonuclease activity"/>
    <property type="evidence" value="ECO:0007669"/>
    <property type="project" value="UniProtKB-EC"/>
</dbReference>
<dbReference type="GO" id="GO:0003684">
    <property type="term" value="F:damaged DNA binding"/>
    <property type="evidence" value="ECO:0007669"/>
    <property type="project" value="InterPro"/>
</dbReference>
<dbReference type="GO" id="GO:0008270">
    <property type="term" value="F:zinc ion binding"/>
    <property type="evidence" value="ECO:0007669"/>
    <property type="project" value="UniProtKB-UniRule"/>
</dbReference>
<dbReference type="GO" id="GO:0006284">
    <property type="term" value="P:base-excision repair"/>
    <property type="evidence" value="ECO:0007669"/>
    <property type="project" value="InterPro"/>
</dbReference>
<dbReference type="CDD" id="cd08966">
    <property type="entry name" value="EcFpg-like_N"/>
    <property type="match status" value="1"/>
</dbReference>
<dbReference type="FunFam" id="1.10.8.50:FF:000003">
    <property type="entry name" value="Formamidopyrimidine-DNA glycosylase"/>
    <property type="match status" value="1"/>
</dbReference>
<dbReference type="FunFam" id="3.20.190.10:FF:000001">
    <property type="entry name" value="Formamidopyrimidine-DNA glycosylase"/>
    <property type="match status" value="1"/>
</dbReference>
<dbReference type="Gene3D" id="1.10.8.50">
    <property type="match status" value="1"/>
</dbReference>
<dbReference type="Gene3D" id="3.20.190.10">
    <property type="entry name" value="MutM-like, N-terminal"/>
    <property type="match status" value="1"/>
</dbReference>
<dbReference type="HAMAP" id="MF_00103">
    <property type="entry name" value="Fapy_DNA_glycosyl"/>
    <property type="match status" value="1"/>
</dbReference>
<dbReference type="InterPro" id="IPR015886">
    <property type="entry name" value="DNA_glyclase/AP_lyase_DNA-bd"/>
</dbReference>
<dbReference type="InterPro" id="IPR015887">
    <property type="entry name" value="DNA_glyclase_Znf_dom_DNA_BS"/>
</dbReference>
<dbReference type="InterPro" id="IPR020629">
    <property type="entry name" value="Formamido-pyr_DNA_Glyclase"/>
</dbReference>
<dbReference type="InterPro" id="IPR012319">
    <property type="entry name" value="FPG_cat"/>
</dbReference>
<dbReference type="InterPro" id="IPR035937">
    <property type="entry name" value="MutM-like_N-ter"/>
</dbReference>
<dbReference type="InterPro" id="IPR010979">
    <property type="entry name" value="Ribosomal_uS13-like_H2TH"/>
</dbReference>
<dbReference type="InterPro" id="IPR000214">
    <property type="entry name" value="Znf_DNA_glyclase/AP_lyase"/>
</dbReference>
<dbReference type="InterPro" id="IPR010663">
    <property type="entry name" value="Znf_FPG/IleRS"/>
</dbReference>
<dbReference type="NCBIfam" id="TIGR00577">
    <property type="entry name" value="fpg"/>
    <property type="match status" value="1"/>
</dbReference>
<dbReference type="NCBIfam" id="NF002211">
    <property type="entry name" value="PRK01103.1"/>
    <property type="match status" value="1"/>
</dbReference>
<dbReference type="PANTHER" id="PTHR22993">
    <property type="entry name" value="FORMAMIDOPYRIMIDINE-DNA GLYCOSYLASE"/>
    <property type="match status" value="1"/>
</dbReference>
<dbReference type="PANTHER" id="PTHR22993:SF9">
    <property type="entry name" value="FORMAMIDOPYRIMIDINE-DNA GLYCOSYLASE"/>
    <property type="match status" value="1"/>
</dbReference>
<dbReference type="Pfam" id="PF01149">
    <property type="entry name" value="Fapy_DNA_glyco"/>
    <property type="match status" value="1"/>
</dbReference>
<dbReference type="Pfam" id="PF06831">
    <property type="entry name" value="H2TH"/>
    <property type="match status" value="1"/>
</dbReference>
<dbReference type="Pfam" id="PF06827">
    <property type="entry name" value="zf-FPG_IleRS"/>
    <property type="match status" value="1"/>
</dbReference>
<dbReference type="SMART" id="SM00898">
    <property type="entry name" value="Fapy_DNA_glyco"/>
    <property type="match status" value="1"/>
</dbReference>
<dbReference type="SMART" id="SM01232">
    <property type="entry name" value="H2TH"/>
    <property type="match status" value="1"/>
</dbReference>
<dbReference type="SUPFAM" id="SSF57716">
    <property type="entry name" value="Glucocorticoid receptor-like (DNA-binding domain)"/>
    <property type="match status" value="1"/>
</dbReference>
<dbReference type="SUPFAM" id="SSF81624">
    <property type="entry name" value="N-terminal domain of MutM-like DNA repair proteins"/>
    <property type="match status" value="1"/>
</dbReference>
<dbReference type="SUPFAM" id="SSF46946">
    <property type="entry name" value="S13-like H2TH domain"/>
    <property type="match status" value="1"/>
</dbReference>
<dbReference type="PROSITE" id="PS51068">
    <property type="entry name" value="FPG_CAT"/>
    <property type="match status" value="1"/>
</dbReference>
<dbReference type="PROSITE" id="PS01242">
    <property type="entry name" value="ZF_FPG_1"/>
    <property type="match status" value="1"/>
</dbReference>
<dbReference type="PROSITE" id="PS51066">
    <property type="entry name" value="ZF_FPG_2"/>
    <property type="match status" value="1"/>
</dbReference>
<proteinExistence type="inferred from homology"/>
<keyword id="KW-0227">DNA damage</keyword>
<keyword id="KW-0234">DNA repair</keyword>
<keyword id="KW-0238">DNA-binding</keyword>
<keyword id="KW-0326">Glycosidase</keyword>
<keyword id="KW-0378">Hydrolase</keyword>
<keyword id="KW-0456">Lyase</keyword>
<keyword id="KW-0479">Metal-binding</keyword>
<keyword id="KW-0511">Multifunctional enzyme</keyword>
<keyword id="KW-0862">Zinc</keyword>
<keyword id="KW-0863">Zinc-finger</keyword>
<organism>
    <name type="scientific">Acidithiobacillus ferrooxidans (strain ATCC 53993 / BNL-5-31)</name>
    <name type="common">Leptospirillum ferrooxidans (ATCC 53993)</name>
    <dbReference type="NCBI Taxonomy" id="380394"/>
    <lineage>
        <taxon>Bacteria</taxon>
        <taxon>Pseudomonadati</taxon>
        <taxon>Pseudomonadota</taxon>
        <taxon>Acidithiobacillia</taxon>
        <taxon>Acidithiobacillales</taxon>
        <taxon>Acidithiobacillaceae</taxon>
        <taxon>Acidithiobacillus</taxon>
    </lineage>
</organism>
<accession>B5ENT6</accession>
<name>FPG_ACIF5</name>